<protein>
    <recommendedName>
        <fullName evidence="1">Ribose-5-phosphate isomerase A 2</fullName>
        <ecNumber evidence="1">5.3.1.6</ecNumber>
    </recommendedName>
    <alternativeName>
        <fullName evidence="1">Phosphoriboisomerase A 2</fullName>
        <shortName evidence="1">PRI 2</shortName>
    </alternativeName>
</protein>
<proteinExistence type="inferred from homology"/>
<accession>Q8ZGJ9</accession>
<accession>Q0WHC0</accession>
<accession>Q8D025</accession>
<evidence type="ECO:0000255" key="1">
    <source>
        <dbReference type="HAMAP-Rule" id="MF_00170"/>
    </source>
</evidence>
<evidence type="ECO:0000305" key="2"/>
<feature type="chain" id="PRO_0000158502" description="Ribose-5-phosphate isomerase A 2">
    <location>
        <begin position="1"/>
        <end position="236"/>
    </location>
</feature>
<feature type="active site" description="Proton acceptor" evidence="1">
    <location>
        <position position="108"/>
    </location>
</feature>
<feature type="binding site" evidence="1">
    <location>
        <begin position="31"/>
        <end position="34"/>
    </location>
    <ligand>
        <name>substrate</name>
    </ligand>
</feature>
<feature type="binding site" evidence="1">
    <location>
        <begin position="86"/>
        <end position="89"/>
    </location>
    <ligand>
        <name>substrate</name>
    </ligand>
</feature>
<feature type="binding site" evidence="1">
    <location>
        <begin position="99"/>
        <end position="102"/>
    </location>
    <ligand>
        <name>substrate</name>
    </ligand>
</feature>
<feature type="binding site" evidence="1">
    <location>
        <position position="126"/>
    </location>
    <ligand>
        <name>substrate</name>
    </ligand>
</feature>
<gene>
    <name evidence="1" type="primary">rpiA2</name>
    <name type="ordered locus">YPO1292</name>
    <name type="ordered locus">y2892</name>
    <name type="ordered locus">YP_1299</name>
</gene>
<keyword id="KW-0413">Isomerase</keyword>
<keyword id="KW-1185">Reference proteome</keyword>
<reference key="1">
    <citation type="journal article" date="2001" name="Nature">
        <title>Genome sequence of Yersinia pestis, the causative agent of plague.</title>
        <authorList>
            <person name="Parkhill J."/>
            <person name="Wren B.W."/>
            <person name="Thomson N.R."/>
            <person name="Titball R.W."/>
            <person name="Holden M.T.G."/>
            <person name="Prentice M.B."/>
            <person name="Sebaihia M."/>
            <person name="James K.D."/>
            <person name="Churcher C.M."/>
            <person name="Mungall K.L."/>
            <person name="Baker S."/>
            <person name="Basham D."/>
            <person name="Bentley S.D."/>
            <person name="Brooks K."/>
            <person name="Cerdeno-Tarraga A.-M."/>
            <person name="Chillingworth T."/>
            <person name="Cronin A."/>
            <person name="Davies R.M."/>
            <person name="Davis P."/>
            <person name="Dougan G."/>
            <person name="Feltwell T."/>
            <person name="Hamlin N."/>
            <person name="Holroyd S."/>
            <person name="Jagels K."/>
            <person name="Karlyshev A.V."/>
            <person name="Leather S."/>
            <person name="Moule S."/>
            <person name="Oyston P.C.F."/>
            <person name="Quail M.A."/>
            <person name="Rutherford K.M."/>
            <person name="Simmonds M."/>
            <person name="Skelton J."/>
            <person name="Stevens K."/>
            <person name="Whitehead S."/>
            <person name="Barrell B.G."/>
        </authorList>
    </citation>
    <scope>NUCLEOTIDE SEQUENCE [LARGE SCALE GENOMIC DNA]</scope>
    <source>
        <strain>CO-92 / Biovar Orientalis</strain>
    </source>
</reference>
<reference key="2">
    <citation type="journal article" date="2002" name="J. Bacteriol.">
        <title>Genome sequence of Yersinia pestis KIM.</title>
        <authorList>
            <person name="Deng W."/>
            <person name="Burland V."/>
            <person name="Plunkett G. III"/>
            <person name="Boutin A."/>
            <person name="Mayhew G.F."/>
            <person name="Liss P."/>
            <person name="Perna N.T."/>
            <person name="Rose D.J."/>
            <person name="Mau B."/>
            <person name="Zhou S."/>
            <person name="Schwartz D.C."/>
            <person name="Fetherston J.D."/>
            <person name="Lindler L.E."/>
            <person name="Brubaker R.R."/>
            <person name="Plano G.V."/>
            <person name="Straley S.C."/>
            <person name="McDonough K.A."/>
            <person name="Nilles M.L."/>
            <person name="Matson J.S."/>
            <person name="Blattner F.R."/>
            <person name="Perry R.D."/>
        </authorList>
    </citation>
    <scope>NUCLEOTIDE SEQUENCE [LARGE SCALE GENOMIC DNA]</scope>
    <source>
        <strain>KIM10+ / Biovar Mediaevalis</strain>
    </source>
</reference>
<reference key="3">
    <citation type="journal article" date="2004" name="DNA Res.">
        <title>Complete genome sequence of Yersinia pestis strain 91001, an isolate avirulent to humans.</title>
        <authorList>
            <person name="Song Y."/>
            <person name="Tong Z."/>
            <person name="Wang J."/>
            <person name="Wang L."/>
            <person name="Guo Z."/>
            <person name="Han Y."/>
            <person name="Zhang J."/>
            <person name="Pei D."/>
            <person name="Zhou D."/>
            <person name="Qin H."/>
            <person name="Pang X."/>
            <person name="Han Y."/>
            <person name="Zhai J."/>
            <person name="Li M."/>
            <person name="Cui B."/>
            <person name="Qi Z."/>
            <person name="Jin L."/>
            <person name="Dai R."/>
            <person name="Chen F."/>
            <person name="Li S."/>
            <person name="Ye C."/>
            <person name="Du Z."/>
            <person name="Lin W."/>
            <person name="Wang J."/>
            <person name="Yu J."/>
            <person name="Yang H."/>
            <person name="Wang J."/>
            <person name="Huang P."/>
            <person name="Yang R."/>
        </authorList>
    </citation>
    <scope>NUCLEOTIDE SEQUENCE [LARGE SCALE GENOMIC DNA]</scope>
    <source>
        <strain>91001 / Biovar Mediaevalis</strain>
    </source>
</reference>
<name>RPIA2_YERPE</name>
<sequence>MSNQQNDAKRAAARRVIQDFVFDGMTLGLGSGTTSHFFVRELGQHVAKGLQLTCTTTSRATSEVARDVGIELSDPNEMNEIDLTIDGPDEIDRRFNMIKGGGACLLWEKIIAHASKRMICICDETKIVNCLGQFPLPVEIVPFAWKQTERRVERVLAEQGLHHVPIIRRMGGGHPVITDSGNFILDCHCGAIITAPEPLEIELNRIPGVVENGLFTREATGMVVGYFDGSSYVQLR</sequence>
<organism>
    <name type="scientific">Yersinia pestis</name>
    <dbReference type="NCBI Taxonomy" id="632"/>
    <lineage>
        <taxon>Bacteria</taxon>
        <taxon>Pseudomonadati</taxon>
        <taxon>Pseudomonadota</taxon>
        <taxon>Gammaproteobacteria</taxon>
        <taxon>Enterobacterales</taxon>
        <taxon>Yersiniaceae</taxon>
        <taxon>Yersinia</taxon>
    </lineage>
</organism>
<dbReference type="EC" id="5.3.1.6" evidence="1"/>
<dbReference type="EMBL" id="AL590842">
    <property type="protein sequence ID" value="CAL19946.1"/>
    <property type="molecule type" value="Genomic_DNA"/>
</dbReference>
<dbReference type="EMBL" id="AE009952">
    <property type="protein sequence ID" value="AAM86443.1"/>
    <property type="status" value="ALT_INIT"/>
    <property type="molecule type" value="Genomic_DNA"/>
</dbReference>
<dbReference type="EMBL" id="AE017042">
    <property type="protein sequence ID" value="AAS61542.1"/>
    <property type="status" value="ALT_INIT"/>
    <property type="molecule type" value="Genomic_DNA"/>
</dbReference>
<dbReference type="PIR" id="AH0157">
    <property type="entry name" value="AH0157"/>
</dbReference>
<dbReference type="RefSeq" id="YP_002346318.1">
    <property type="nucleotide sequence ID" value="NC_003143.1"/>
</dbReference>
<dbReference type="SMR" id="Q8ZGJ9"/>
<dbReference type="IntAct" id="Q8ZGJ9">
    <property type="interactions" value="2"/>
</dbReference>
<dbReference type="STRING" id="214092.YPO1292"/>
<dbReference type="PaxDb" id="214092-YPO1292"/>
<dbReference type="DNASU" id="1147839"/>
<dbReference type="EnsemblBacteria" id="AAS61542">
    <property type="protein sequence ID" value="AAS61542"/>
    <property type="gene ID" value="YP_1299"/>
</dbReference>
<dbReference type="KEGG" id="ype:YPO1292"/>
<dbReference type="KEGG" id="ypk:y2892"/>
<dbReference type="KEGG" id="ypm:YP_1299"/>
<dbReference type="PATRIC" id="fig|214092.21.peg.1601"/>
<dbReference type="eggNOG" id="COG0120">
    <property type="taxonomic scope" value="Bacteria"/>
</dbReference>
<dbReference type="HOGENOM" id="CLU_056590_1_0_6"/>
<dbReference type="OMA" id="LGIPMYN"/>
<dbReference type="OrthoDB" id="5870696at2"/>
<dbReference type="UniPathway" id="UPA00115">
    <property type="reaction ID" value="UER00412"/>
</dbReference>
<dbReference type="Proteomes" id="UP000000815">
    <property type="component" value="Chromosome"/>
</dbReference>
<dbReference type="Proteomes" id="UP000001019">
    <property type="component" value="Chromosome"/>
</dbReference>
<dbReference type="Proteomes" id="UP000002490">
    <property type="component" value="Chromosome"/>
</dbReference>
<dbReference type="GO" id="GO:0005829">
    <property type="term" value="C:cytosol"/>
    <property type="evidence" value="ECO:0000318"/>
    <property type="project" value="GO_Central"/>
</dbReference>
<dbReference type="GO" id="GO:0004751">
    <property type="term" value="F:ribose-5-phosphate isomerase activity"/>
    <property type="evidence" value="ECO:0000318"/>
    <property type="project" value="GO_Central"/>
</dbReference>
<dbReference type="GO" id="GO:0006014">
    <property type="term" value="P:D-ribose metabolic process"/>
    <property type="evidence" value="ECO:0000318"/>
    <property type="project" value="GO_Central"/>
</dbReference>
<dbReference type="GO" id="GO:0009052">
    <property type="term" value="P:pentose-phosphate shunt, non-oxidative branch"/>
    <property type="evidence" value="ECO:0000318"/>
    <property type="project" value="GO_Central"/>
</dbReference>
<dbReference type="CDD" id="cd01398">
    <property type="entry name" value="RPI_A"/>
    <property type="match status" value="1"/>
</dbReference>
<dbReference type="FunFam" id="3.40.50.1360:FF:000001">
    <property type="entry name" value="Ribose-5-phosphate isomerase A"/>
    <property type="match status" value="1"/>
</dbReference>
<dbReference type="Gene3D" id="3.30.70.260">
    <property type="match status" value="1"/>
</dbReference>
<dbReference type="Gene3D" id="3.40.50.1360">
    <property type="match status" value="1"/>
</dbReference>
<dbReference type="HAMAP" id="MF_00170">
    <property type="entry name" value="Rib_5P_isom_A"/>
    <property type="match status" value="1"/>
</dbReference>
<dbReference type="InterPro" id="IPR037171">
    <property type="entry name" value="NagB/RpiA_transferase-like"/>
</dbReference>
<dbReference type="InterPro" id="IPR020672">
    <property type="entry name" value="Ribose5P_isomerase_typA_subgr"/>
</dbReference>
<dbReference type="InterPro" id="IPR004788">
    <property type="entry name" value="Ribose5P_isomerase_type_A"/>
</dbReference>
<dbReference type="NCBIfam" id="NF001924">
    <property type="entry name" value="PRK00702.1"/>
    <property type="match status" value="1"/>
</dbReference>
<dbReference type="NCBIfam" id="TIGR00021">
    <property type="entry name" value="rpiA"/>
    <property type="match status" value="1"/>
</dbReference>
<dbReference type="PANTHER" id="PTHR11934">
    <property type="entry name" value="RIBOSE-5-PHOSPHATE ISOMERASE"/>
    <property type="match status" value="1"/>
</dbReference>
<dbReference type="PANTHER" id="PTHR11934:SF0">
    <property type="entry name" value="RIBOSE-5-PHOSPHATE ISOMERASE"/>
    <property type="match status" value="1"/>
</dbReference>
<dbReference type="Pfam" id="PF06026">
    <property type="entry name" value="Rib_5-P_isom_A"/>
    <property type="match status" value="1"/>
</dbReference>
<dbReference type="SUPFAM" id="SSF75445">
    <property type="entry name" value="D-ribose-5-phosphate isomerase (RpiA), lid domain"/>
    <property type="match status" value="1"/>
</dbReference>
<dbReference type="SUPFAM" id="SSF100950">
    <property type="entry name" value="NagB/RpiA/CoA transferase-like"/>
    <property type="match status" value="1"/>
</dbReference>
<comment type="function">
    <text evidence="1">Catalyzes the reversible conversion of ribose-5-phosphate to ribulose 5-phosphate.</text>
</comment>
<comment type="catalytic activity">
    <reaction evidence="1">
        <text>aldehydo-D-ribose 5-phosphate = D-ribulose 5-phosphate</text>
        <dbReference type="Rhea" id="RHEA:14657"/>
        <dbReference type="ChEBI" id="CHEBI:58121"/>
        <dbReference type="ChEBI" id="CHEBI:58273"/>
        <dbReference type="EC" id="5.3.1.6"/>
    </reaction>
</comment>
<comment type="pathway">
    <text evidence="1">Carbohydrate degradation; pentose phosphate pathway; D-ribose 5-phosphate from D-ribulose 5-phosphate (non-oxidative stage): step 1/1.</text>
</comment>
<comment type="subunit">
    <text evidence="1">Homodimer.</text>
</comment>
<comment type="similarity">
    <text evidence="1">Belongs to the ribose 5-phosphate isomerase family.</text>
</comment>
<comment type="sequence caution" evidence="2">
    <conflict type="erroneous initiation">
        <sequence resource="EMBL-CDS" id="AAM86443"/>
    </conflict>
</comment>
<comment type="sequence caution" evidence="2">
    <conflict type="erroneous initiation">
        <sequence resource="EMBL-CDS" id="AAS61542"/>
    </conflict>
</comment>